<reference key="1">
    <citation type="submission" date="2005-09" db="EMBL/GenBank/DDBJ databases">
        <title>Annotation of the Aspergillus terreus NIH2624 genome.</title>
        <authorList>
            <person name="Birren B.W."/>
            <person name="Lander E.S."/>
            <person name="Galagan J.E."/>
            <person name="Nusbaum C."/>
            <person name="Devon K."/>
            <person name="Henn M."/>
            <person name="Ma L.-J."/>
            <person name="Jaffe D.B."/>
            <person name="Butler J."/>
            <person name="Alvarez P."/>
            <person name="Gnerre S."/>
            <person name="Grabherr M."/>
            <person name="Kleber M."/>
            <person name="Mauceli E.W."/>
            <person name="Brockman W."/>
            <person name="Rounsley S."/>
            <person name="Young S.K."/>
            <person name="LaButti K."/>
            <person name="Pushparaj V."/>
            <person name="DeCaprio D."/>
            <person name="Crawford M."/>
            <person name="Koehrsen M."/>
            <person name="Engels R."/>
            <person name="Montgomery P."/>
            <person name="Pearson M."/>
            <person name="Howarth C."/>
            <person name="Larson L."/>
            <person name="Luoma S."/>
            <person name="White J."/>
            <person name="Alvarado L."/>
            <person name="Kodira C.D."/>
            <person name="Zeng Q."/>
            <person name="Oleary S."/>
            <person name="Yandava C."/>
            <person name="Denning D.W."/>
            <person name="Nierman W.C."/>
            <person name="Milne T."/>
            <person name="Madden K."/>
        </authorList>
    </citation>
    <scope>NUCLEOTIDE SEQUENCE [LARGE SCALE GENOMIC DNA]</scope>
    <source>
        <strain>NIH 2624 / FGSC A1156</strain>
    </source>
</reference>
<accession>Q0CEI2</accession>
<protein>
    <recommendedName>
        <fullName>Dicer-like protein 2</fullName>
    </recommendedName>
    <domain>
        <recommendedName>
            <fullName>Endoribonuclease dcl2</fullName>
            <ecNumber>3.1.26.-</ecNumber>
        </recommendedName>
    </domain>
    <domain>
        <recommendedName>
            <fullName>ATP-dependent helicase dcl2</fullName>
            <ecNumber>3.6.4.-</ecNumber>
        </recommendedName>
    </domain>
</protein>
<dbReference type="EC" id="3.1.26.-"/>
<dbReference type="EC" id="3.6.4.-"/>
<dbReference type="EMBL" id="CH476604">
    <property type="protein sequence ID" value="EAU32164.1"/>
    <property type="status" value="ALT_SEQ"/>
    <property type="molecule type" value="Genomic_DNA"/>
</dbReference>
<dbReference type="RefSeq" id="XP_001216523.1">
    <property type="nucleotide sequence ID" value="XM_001216523.1"/>
</dbReference>
<dbReference type="STRING" id="341663.Q0CEI2"/>
<dbReference type="GeneID" id="4322847"/>
<dbReference type="eggNOG" id="KOG0701">
    <property type="taxonomic scope" value="Eukaryota"/>
</dbReference>
<dbReference type="OrthoDB" id="416741at2759"/>
<dbReference type="Proteomes" id="UP000007963">
    <property type="component" value="Unassembled WGS sequence"/>
</dbReference>
<dbReference type="GO" id="GO:0005737">
    <property type="term" value="C:cytoplasm"/>
    <property type="evidence" value="ECO:0007669"/>
    <property type="project" value="TreeGrafter"/>
</dbReference>
<dbReference type="GO" id="GO:0005634">
    <property type="term" value="C:nucleus"/>
    <property type="evidence" value="ECO:0007669"/>
    <property type="project" value="TreeGrafter"/>
</dbReference>
<dbReference type="GO" id="GO:0005524">
    <property type="term" value="F:ATP binding"/>
    <property type="evidence" value="ECO:0007669"/>
    <property type="project" value="UniProtKB-KW"/>
</dbReference>
<dbReference type="GO" id="GO:0004386">
    <property type="term" value="F:helicase activity"/>
    <property type="evidence" value="ECO:0007669"/>
    <property type="project" value="UniProtKB-KW"/>
</dbReference>
<dbReference type="GO" id="GO:0046872">
    <property type="term" value="F:metal ion binding"/>
    <property type="evidence" value="ECO:0007669"/>
    <property type="project" value="UniProtKB-KW"/>
</dbReference>
<dbReference type="GO" id="GO:0004525">
    <property type="term" value="F:ribonuclease III activity"/>
    <property type="evidence" value="ECO:0007669"/>
    <property type="project" value="InterPro"/>
</dbReference>
<dbReference type="GO" id="GO:0003723">
    <property type="term" value="F:RNA binding"/>
    <property type="evidence" value="ECO:0007669"/>
    <property type="project" value="UniProtKB-KW"/>
</dbReference>
<dbReference type="GO" id="GO:0051607">
    <property type="term" value="P:defense response to virus"/>
    <property type="evidence" value="ECO:0007669"/>
    <property type="project" value="UniProtKB-KW"/>
</dbReference>
<dbReference type="GO" id="GO:0050688">
    <property type="term" value="P:regulation of defense response to virus"/>
    <property type="evidence" value="ECO:0007669"/>
    <property type="project" value="UniProtKB-KW"/>
</dbReference>
<dbReference type="GO" id="GO:0030422">
    <property type="term" value="P:siRNA processing"/>
    <property type="evidence" value="ECO:0007669"/>
    <property type="project" value="TreeGrafter"/>
</dbReference>
<dbReference type="CDD" id="cd18034">
    <property type="entry name" value="DEXHc_dicer"/>
    <property type="match status" value="1"/>
</dbReference>
<dbReference type="CDD" id="cd00593">
    <property type="entry name" value="RIBOc"/>
    <property type="match status" value="2"/>
</dbReference>
<dbReference type="CDD" id="cd18802">
    <property type="entry name" value="SF2_C_dicer"/>
    <property type="match status" value="1"/>
</dbReference>
<dbReference type="FunFam" id="1.10.1520.10:FF:000015">
    <property type="entry name" value="Dicer-like protein 1"/>
    <property type="match status" value="1"/>
</dbReference>
<dbReference type="FunFam" id="3.40.50.300:FF:001669">
    <property type="entry name" value="Dicer-like protein 1"/>
    <property type="match status" value="1"/>
</dbReference>
<dbReference type="FunFam" id="1.10.1520.10:FF:000032">
    <property type="entry name" value="Dicer-like protein 2"/>
    <property type="match status" value="1"/>
</dbReference>
<dbReference type="FunFam" id="3.40.50.300:FF:002480">
    <property type="entry name" value="Dicer-like protein 2"/>
    <property type="match status" value="1"/>
</dbReference>
<dbReference type="Gene3D" id="3.30.160.380">
    <property type="entry name" value="Dicer dimerisation domain"/>
    <property type="match status" value="1"/>
</dbReference>
<dbReference type="Gene3D" id="3.40.50.300">
    <property type="entry name" value="P-loop containing nucleotide triphosphate hydrolases"/>
    <property type="match status" value="2"/>
</dbReference>
<dbReference type="Gene3D" id="1.10.1520.10">
    <property type="entry name" value="Ribonuclease III domain"/>
    <property type="match status" value="2"/>
</dbReference>
<dbReference type="InterPro" id="IPR011545">
    <property type="entry name" value="DEAD/DEAH_box_helicase_dom"/>
</dbReference>
<dbReference type="InterPro" id="IPR038248">
    <property type="entry name" value="Dicer_dimer_sf"/>
</dbReference>
<dbReference type="InterPro" id="IPR005034">
    <property type="entry name" value="Dicer_dimerisation_dom"/>
</dbReference>
<dbReference type="InterPro" id="IPR014001">
    <property type="entry name" value="Helicase_ATP-bd"/>
</dbReference>
<dbReference type="InterPro" id="IPR001650">
    <property type="entry name" value="Helicase_C-like"/>
</dbReference>
<dbReference type="InterPro" id="IPR027417">
    <property type="entry name" value="P-loop_NTPase"/>
</dbReference>
<dbReference type="InterPro" id="IPR000999">
    <property type="entry name" value="RNase_III_dom"/>
</dbReference>
<dbReference type="InterPro" id="IPR036389">
    <property type="entry name" value="RNase_III_sf"/>
</dbReference>
<dbReference type="PANTHER" id="PTHR14950">
    <property type="entry name" value="DICER-RELATED"/>
    <property type="match status" value="1"/>
</dbReference>
<dbReference type="PANTHER" id="PTHR14950:SF37">
    <property type="entry name" value="ENDORIBONUCLEASE DICER"/>
    <property type="match status" value="1"/>
</dbReference>
<dbReference type="Pfam" id="PF00270">
    <property type="entry name" value="DEAD"/>
    <property type="match status" value="1"/>
</dbReference>
<dbReference type="Pfam" id="PF03368">
    <property type="entry name" value="Dicer_dimer"/>
    <property type="match status" value="1"/>
</dbReference>
<dbReference type="Pfam" id="PF00271">
    <property type="entry name" value="Helicase_C"/>
    <property type="match status" value="1"/>
</dbReference>
<dbReference type="Pfam" id="PF00636">
    <property type="entry name" value="Ribonuclease_3"/>
    <property type="match status" value="2"/>
</dbReference>
<dbReference type="SMART" id="SM00487">
    <property type="entry name" value="DEXDc"/>
    <property type="match status" value="1"/>
</dbReference>
<dbReference type="SMART" id="SM00490">
    <property type="entry name" value="HELICc"/>
    <property type="match status" value="1"/>
</dbReference>
<dbReference type="SMART" id="SM00535">
    <property type="entry name" value="RIBOc"/>
    <property type="match status" value="2"/>
</dbReference>
<dbReference type="SUPFAM" id="SSF52540">
    <property type="entry name" value="P-loop containing nucleoside triphosphate hydrolases"/>
    <property type="match status" value="1"/>
</dbReference>
<dbReference type="SUPFAM" id="SSF69065">
    <property type="entry name" value="RNase III domain-like"/>
    <property type="match status" value="2"/>
</dbReference>
<dbReference type="PROSITE" id="PS51327">
    <property type="entry name" value="DICER_DSRBF"/>
    <property type="match status" value="1"/>
</dbReference>
<dbReference type="PROSITE" id="PS51192">
    <property type="entry name" value="HELICASE_ATP_BIND_1"/>
    <property type="match status" value="1"/>
</dbReference>
<dbReference type="PROSITE" id="PS51194">
    <property type="entry name" value="HELICASE_CTER"/>
    <property type="match status" value="1"/>
</dbReference>
<dbReference type="PROSITE" id="PS00517">
    <property type="entry name" value="RNASE_3_1"/>
    <property type="match status" value="1"/>
</dbReference>
<dbReference type="PROSITE" id="PS50142">
    <property type="entry name" value="RNASE_3_2"/>
    <property type="match status" value="2"/>
</dbReference>
<keyword id="KW-0051">Antiviral defense</keyword>
<keyword id="KW-0930">Antiviral protein</keyword>
<keyword id="KW-0067">ATP-binding</keyword>
<keyword id="KW-0347">Helicase</keyword>
<keyword id="KW-0378">Hydrolase</keyword>
<keyword id="KW-0460">Magnesium</keyword>
<keyword id="KW-0464">Manganese</keyword>
<keyword id="KW-0479">Metal-binding</keyword>
<keyword id="KW-0547">Nucleotide-binding</keyword>
<keyword id="KW-1185">Reference proteome</keyword>
<keyword id="KW-0677">Repeat</keyword>
<keyword id="KW-0694">RNA-binding</keyword>
<evidence type="ECO:0000250" key="1"/>
<evidence type="ECO:0000255" key="2">
    <source>
        <dbReference type="PROSITE-ProRule" id="PRU00177"/>
    </source>
</evidence>
<evidence type="ECO:0000255" key="3">
    <source>
        <dbReference type="PROSITE-ProRule" id="PRU00541"/>
    </source>
</evidence>
<evidence type="ECO:0000255" key="4">
    <source>
        <dbReference type="PROSITE-ProRule" id="PRU00542"/>
    </source>
</evidence>
<evidence type="ECO:0000255" key="5">
    <source>
        <dbReference type="PROSITE-ProRule" id="PRU00657"/>
    </source>
</evidence>
<evidence type="ECO:0000305" key="6"/>
<proteinExistence type="inferred from homology"/>
<name>DCL2_ASPTN</name>
<sequence length="1377" mass="155084">MASLSDQDLEMGLFCPRNYQTEMFEASLQENIIVAMDTGSGKTHVALLRIMNELETRRPQKLIWFLAPTVALCFQQHDVITKNLPAVKSRTLTGQDKVELWTEQAIWDAILKDMQVVVSTHAVLADAMSNGFVRVSQLGLLIFDEAHHCMRRHPANRIMQDFYHPTLVKQGPDAVPGILGLTASPVVRTNSQELSMIESNMNAICKTPRAHRQELLTHTHRPHLQQIWYTPVNIDDPTSGTRTLRALIHAWETIDLEDDPYVKQLRRSTFDGKALQKALLTRKTYCNESLRRFVERSCHIFQELGGWAVDYFIHASIRRLREKIDDSALMLDWDNEEKEYLASFLSNIATIQSDPPRRPEDFIPSPKLEALISFLSSTDDSTFSGLIFAKQRATVTVLATLLSVHPLTKDRFRCAAFVGWSGGGNRKDLIGELLSMQMQRDTLSEFRSGQKNLIVATDVLEEGIDISACSVVICYDKPANVKSFVQRRGRARRKESTFAILFSTDDELCDLRKWQLLEEAMIEAYQDDERKRCEALALETMAEVVTERFEVESTGAVLTADTAVARLHHFCSILPQQPYVDNRPELSFEYDGTGRRRGTFKLPSCVHPDVRRTRGEKWWTTERAATKEAAFQTCKRLYEFGLLNDHLLPLTRKPELRLTDFGGLPSIIEVAEQYDPWTDWAYSWSSPDIHQSRIRVQLNGNPEYQLSMSLMGPTVLPALDAMTLFWDSQNIFTLAFDAAQRVPLVPGDVIEHMRAITALYLQAPSSRSIREERDYVALFGPDLPHTELGAWLLKNGGNDTALDVYSRQVASPTMGIVRDRTRYDEPLLFKKWVVTEDGDVAVVEMECHSLPKRRNLLQRQTLAQGEIVTTAVDTAPAKARIIPATACTIDRLPFTDTIFGLFISAILDRLEATLIATRLCETILQDVQFSSTRHVITAISAPTAQSPTDYQRYEFFGDSVLKFTVSCQLYMQHPNWPEGYLSEGRDEIVQNNRLARAALDVGLDAFILTRRFTPRKWTAPLISEKAVEVAGKRPLSSKVLADVVESLIGAAYMDGGQAKAHTCIRRLLPEIEICPITPPPVHESAPHVMNDSLKQHLGYTFVNEALLVEALTHPSCRSDASTQSYQRLEFLGDAVLDMVVVHAMAHHAVECPQGEMTMIKHALTNANLLAFFCMEFVVAQEHTDVDAVPAAGGFALRSEQKPIELWRFMRSEALDLNNARETVLHRHSQLRAEIVHALHHGAQYPWQALSQLNADKFFSDIVESILGAIFVDSRGDLDVCAMFVERIGLLPYLRRILADRVDVMHPRHTAQRLSKGEALFTAKRVVDGSGNASYRCVVKRNKEEIVVVEGCLSSEEAEVKAANATIGILRANAVNLV</sequence>
<comment type="function">
    <text evidence="1">Dicer-like endonuclease involved in cleaving double-stranded RNA in the RNA interference (RNAi) pathway. Produces 21 to 25 bp dsRNAs (siRNAs) which target the selective destruction of homologous RNAs leading to sequence-specific suppression of gene expression, called post-transcriptional gene silencing (PTGS). Part of a broad host defense response against viral infection and transposons (By similarity).</text>
</comment>
<comment type="cofactor">
    <cofactor evidence="1">
        <name>Mg(2+)</name>
        <dbReference type="ChEBI" id="CHEBI:18420"/>
    </cofactor>
    <cofactor evidence="1">
        <name>Mn(2+)</name>
        <dbReference type="ChEBI" id="CHEBI:29035"/>
    </cofactor>
</comment>
<comment type="similarity">
    <text evidence="5">Belongs to the helicase family. Dicer subfamily.</text>
</comment>
<comment type="sequence caution" evidence="6">
    <conflict type="erroneous gene model prediction">
        <sequence resource="EMBL-CDS" id="EAU32164"/>
    </conflict>
</comment>
<organism>
    <name type="scientific">Aspergillus terreus (strain NIH 2624 / FGSC A1156)</name>
    <dbReference type="NCBI Taxonomy" id="341663"/>
    <lineage>
        <taxon>Eukaryota</taxon>
        <taxon>Fungi</taxon>
        <taxon>Dikarya</taxon>
        <taxon>Ascomycota</taxon>
        <taxon>Pezizomycotina</taxon>
        <taxon>Eurotiomycetes</taxon>
        <taxon>Eurotiomycetidae</taxon>
        <taxon>Eurotiales</taxon>
        <taxon>Aspergillaceae</taxon>
        <taxon>Aspergillus</taxon>
        <taxon>Aspergillus subgen. Circumdati</taxon>
    </lineage>
</organism>
<gene>
    <name type="primary">dcl2</name>
    <name type="ORF">ATEG_07902</name>
</gene>
<feature type="chain" id="PRO_0000306790" description="Dicer-like protein 2">
    <location>
        <begin position="1"/>
        <end position="1377"/>
    </location>
</feature>
<feature type="domain" description="Helicase ATP-binding" evidence="3">
    <location>
        <begin position="23"/>
        <end position="203"/>
    </location>
</feature>
<feature type="domain" description="Helicase C-terminal" evidence="4">
    <location>
        <begin position="367"/>
        <end position="544"/>
    </location>
</feature>
<feature type="domain" description="Dicer dsRNA-binding fold" evidence="5">
    <location>
        <begin position="563"/>
        <end position="657"/>
    </location>
</feature>
<feature type="domain" description="RNase III 1" evidence="2">
    <location>
        <begin position="916"/>
        <end position="1056"/>
    </location>
</feature>
<feature type="domain" description="RNase III 2" evidence="2">
    <location>
        <begin position="1090"/>
        <end position="1274"/>
    </location>
</feature>
<feature type="short sequence motif" description="DEAH box">
    <location>
        <begin position="144"/>
        <end position="147"/>
    </location>
</feature>
<feature type="binding site" evidence="3">
    <location>
        <begin position="36"/>
        <end position="43"/>
    </location>
    <ligand>
        <name>ATP</name>
        <dbReference type="ChEBI" id="CHEBI:30616"/>
    </ligand>
</feature>
<feature type="binding site" evidence="1">
    <location>
        <position position="1129"/>
    </location>
    <ligand>
        <name>Mg(2+)</name>
        <dbReference type="ChEBI" id="CHEBI:18420"/>
    </ligand>
</feature>
<feature type="binding site" evidence="1">
    <location>
        <position position="1260"/>
    </location>
    <ligand>
        <name>Mg(2+)</name>
        <dbReference type="ChEBI" id="CHEBI:18420"/>
    </ligand>
</feature>
<feature type="binding site" evidence="1">
    <location>
        <position position="1263"/>
    </location>
    <ligand>
        <name>Mg(2+)</name>
        <dbReference type="ChEBI" id="CHEBI:18420"/>
    </ligand>
</feature>
<feature type="site" description="Important for activity" evidence="1">
    <location>
        <position position="1256"/>
    </location>
</feature>